<feature type="signal peptide" evidence="1">
    <location>
        <begin position="1"/>
        <end position="24"/>
    </location>
</feature>
<feature type="chain" id="PRO_0000018909" description="Class I histocompatibility antigen, Gogo-OKO alpha chain">
    <location>
        <begin position="25"/>
        <end position="362"/>
    </location>
</feature>
<feature type="topological domain" description="Extracellular" evidence="2">
    <location>
        <begin position="25"/>
        <end position="308"/>
    </location>
</feature>
<feature type="transmembrane region" description="Helical" evidence="2">
    <location>
        <begin position="309"/>
        <end position="332"/>
    </location>
</feature>
<feature type="topological domain" description="Cytoplasmic" evidence="2">
    <location>
        <begin position="333"/>
        <end position="362"/>
    </location>
</feature>
<feature type="domain" description="Ig-like C1-type">
    <location>
        <begin position="209"/>
        <end position="295"/>
    </location>
</feature>
<feature type="region of interest" description="Alpha-1">
    <location>
        <begin position="25"/>
        <end position="114"/>
    </location>
</feature>
<feature type="region of interest" description="Alpha-2">
    <location>
        <begin position="115"/>
        <end position="206"/>
    </location>
</feature>
<feature type="region of interest" description="Alpha-3">
    <location>
        <begin position="207"/>
        <end position="298"/>
    </location>
</feature>
<feature type="region of interest" description="Connecting peptide">
    <location>
        <begin position="299"/>
        <end position="308"/>
    </location>
</feature>
<feature type="region of interest" description="Disordered" evidence="4">
    <location>
        <begin position="337"/>
        <end position="362"/>
    </location>
</feature>
<feature type="compositionally biased region" description="Low complexity" evidence="4">
    <location>
        <begin position="342"/>
        <end position="362"/>
    </location>
</feature>
<feature type="glycosylation site" description="N-linked (GlcNAc...) asparagine" evidence="1">
    <location>
        <position position="110"/>
    </location>
</feature>
<feature type="disulfide bond" evidence="3">
    <location>
        <begin position="125"/>
        <end position="188"/>
    </location>
</feature>
<feature type="disulfide bond" evidence="3">
    <location>
        <begin position="227"/>
        <end position="283"/>
    </location>
</feature>
<reference key="1">
    <citation type="journal article" date="1991" name="J. Exp. Med.">
        <title>Gorilla class I major histocompatibility complex alleles: comparison to human and chimpanzee class I.</title>
        <authorList>
            <person name="Lawlor D.A."/>
            <person name="Warren E."/>
            <person name="Taylor P."/>
            <person name="Parham P."/>
        </authorList>
    </citation>
    <scope>NUCLEOTIDE SEQUENCE [MRNA]</scope>
</reference>
<evidence type="ECO:0000250" key="1"/>
<evidence type="ECO:0000255" key="2"/>
<evidence type="ECO:0000255" key="3">
    <source>
        <dbReference type="PROSITE-ProRule" id="PRU00114"/>
    </source>
</evidence>
<evidence type="ECO:0000256" key="4">
    <source>
        <dbReference type="SAM" id="MobiDB-lite"/>
    </source>
</evidence>
<evidence type="ECO:0000305" key="5"/>
<organism>
    <name type="scientific">Gorilla gorilla gorilla</name>
    <name type="common">Western lowland gorilla</name>
    <dbReference type="NCBI Taxonomy" id="9595"/>
    <lineage>
        <taxon>Eukaryota</taxon>
        <taxon>Metazoa</taxon>
        <taxon>Chordata</taxon>
        <taxon>Craniata</taxon>
        <taxon>Vertebrata</taxon>
        <taxon>Euteleostomi</taxon>
        <taxon>Mammalia</taxon>
        <taxon>Eutheria</taxon>
        <taxon>Euarchontoglires</taxon>
        <taxon>Primates</taxon>
        <taxon>Haplorrhini</taxon>
        <taxon>Catarrhini</taxon>
        <taxon>Hominidae</taxon>
        <taxon>Gorilla</taxon>
    </lineage>
</organism>
<comment type="function">
    <text>Involved in the presentation of foreign antigens to the immune system.</text>
</comment>
<comment type="subunit">
    <text>Heterodimer of an alpha chain and a beta chain (beta-2-microglobulin).</text>
</comment>
<comment type="subcellular location">
    <subcellularLocation>
        <location>Membrane</location>
        <topology>Single-pass type I membrane protein</topology>
    </subcellularLocation>
</comment>
<comment type="similarity">
    <text evidence="5">Belongs to the MHC class I family.</text>
</comment>
<dbReference type="EMBL" id="X60692">
    <property type="protein sequence ID" value="CAA43100.1"/>
    <property type="molecule type" value="mRNA"/>
</dbReference>
<dbReference type="PIR" id="JH0538">
    <property type="entry name" value="JH0538"/>
</dbReference>
<dbReference type="SMR" id="P30388"/>
<dbReference type="FunCoup" id="P30388">
    <property type="interactions" value="271"/>
</dbReference>
<dbReference type="STRING" id="9593.ENSGGOP00000022475"/>
<dbReference type="InParanoid" id="P30388"/>
<dbReference type="Proteomes" id="UP000001519">
    <property type="component" value="Unplaced"/>
</dbReference>
<dbReference type="GO" id="GO:0031901">
    <property type="term" value="C:early endosome membrane"/>
    <property type="evidence" value="ECO:0007669"/>
    <property type="project" value="UniProtKB-ARBA"/>
</dbReference>
<dbReference type="GO" id="GO:0012507">
    <property type="term" value="C:ER to Golgi transport vesicle membrane"/>
    <property type="evidence" value="ECO:0007669"/>
    <property type="project" value="UniProtKB-ARBA"/>
</dbReference>
<dbReference type="GO" id="GO:0009897">
    <property type="term" value="C:external side of plasma membrane"/>
    <property type="evidence" value="ECO:0000318"/>
    <property type="project" value="GO_Central"/>
</dbReference>
<dbReference type="GO" id="GO:0005615">
    <property type="term" value="C:extracellular space"/>
    <property type="evidence" value="ECO:0000318"/>
    <property type="project" value="GO_Central"/>
</dbReference>
<dbReference type="GO" id="GO:0098553">
    <property type="term" value="C:lumenal side of endoplasmic reticulum membrane"/>
    <property type="evidence" value="ECO:0007669"/>
    <property type="project" value="UniProtKB-ARBA"/>
</dbReference>
<dbReference type="GO" id="GO:0042612">
    <property type="term" value="C:MHC class I protein complex"/>
    <property type="evidence" value="ECO:0007669"/>
    <property type="project" value="UniProtKB-KW"/>
</dbReference>
<dbReference type="GO" id="GO:0030670">
    <property type="term" value="C:phagocytic vesicle membrane"/>
    <property type="evidence" value="ECO:0007669"/>
    <property type="project" value="UniProtKB-ARBA"/>
</dbReference>
<dbReference type="GO" id="GO:0055038">
    <property type="term" value="C:recycling endosome membrane"/>
    <property type="evidence" value="ECO:0007669"/>
    <property type="project" value="UniProtKB-ARBA"/>
</dbReference>
<dbReference type="GO" id="GO:0042605">
    <property type="term" value="F:peptide antigen binding"/>
    <property type="evidence" value="ECO:0000318"/>
    <property type="project" value="GO_Central"/>
</dbReference>
<dbReference type="GO" id="GO:0005102">
    <property type="term" value="F:signaling receptor binding"/>
    <property type="evidence" value="ECO:0000318"/>
    <property type="project" value="GO_Central"/>
</dbReference>
<dbReference type="GO" id="GO:0002486">
    <property type="term" value="P:antigen processing and presentation of endogenous peptide antigen via MHC class I via ER pathway, TAP-independent"/>
    <property type="evidence" value="ECO:0000318"/>
    <property type="project" value="GO_Central"/>
</dbReference>
<dbReference type="GO" id="GO:0002476">
    <property type="term" value="P:antigen processing and presentation of endogenous peptide antigen via MHC class Ib"/>
    <property type="evidence" value="ECO:0000318"/>
    <property type="project" value="GO_Central"/>
</dbReference>
<dbReference type="GO" id="GO:0006955">
    <property type="term" value="P:immune response"/>
    <property type="evidence" value="ECO:0000318"/>
    <property type="project" value="GO_Central"/>
</dbReference>
<dbReference type="GO" id="GO:0001916">
    <property type="term" value="P:positive regulation of T cell mediated cytotoxicity"/>
    <property type="evidence" value="ECO:0000318"/>
    <property type="project" value="GO_Central"/>
</dbReference>
<dbReference type="FunFam" id="2.60.40.10:FF:000014">
    <property type="entry name" value="H-2 class I histocompatibility antigen, alpha chain"/>
    <property type="match status" value="1"/>
</dbReference>
<dbReference type="FunFam" id="3.30.500.10:FF:000001">
    <property type="entry name" value="H-2 class I histocompatibility antigen, alpha chain"/>
    <property type="match status" value="1"/>
</dbReference>
<dbReference type="Gene3D" id="2.60.40.10">
    <property type="entry name" value="Immunoglobulins"/>
    <property type="match status" value="1"/>
</dbReference>
<dbReference type="Gene3D" id="3.30.500.10">
    <property type="entry name" value="MHC class I-like antigen recognition-like"/>
    <property type="match status" value="1"/>
</dbReference>
<dbReference type="InterPro" id="IPR007110">
    <property type="entry name" value="Ig-like_dom"/>
</dbReference>
<dbReference type="InterPro" id="IPR036179">
    <property type="entry name" value="Ig-like_dom_sf"/>
</dbReference>
<dbReference type="InterPro" id="IPR013783">
    <property type="entry name" value="Ig-like_fold"/>
</dbReference>
<dbReference type="InterPro" id="IPR003006">
    <property type="entry name" value="Ig/MHC_CS"/>
</dbReference>
<dbReference type="InterPro" id="IPR003597">
    <property type="entry name" value="Ig_C1-set"/>
</dbReference>
<dbReference type="InterPro" id="IPR050208">
    <property type="entry name" value="MHC_class-I_related"/>
</dbReference>
<dbReference type="InterPro" id="IPR011161">
    <property type="entry name" value="MHC_I-like_Ag-recog"/>
</dbReference>
<dbReference type="InterPro" id="IPR037055">
    <property type="entry name" value="MHC_I-like_Ag-recog_sf"/>
</dbReference>
<dbReference type="InterPro" id="IPR011162">
    <property type="entry name" value="MHC_I/II-like_Ag-recog"/>
</dbReference>
<dbReference type="InterPro" id="IPR001039">
    <property type="entry name" value="MHC_I_a_a1/a2"/>
</dbReference>
<dbReference type="InterPro" id="IPR010579">
    <property type="entry name" value="MHC_I_a_C"/>
</dbReference>
<dbReference type="PANTHER" id="PTHR16675:SF256">
    <property type="entry name" value="HLA CLASS I HISTOCOMPATIBILITY ANTIGEN, ALPHA CHAIN H-RELATED"/>
    <property type="match status" value="1"/>
</dbReference>
<dbReference type="PANTHER" id="PTHR16675">
    <property type="entry name" value="MHC CLASS I-RELATED"/>
    <property type="match status" value="1"/>
</dbReference>
<dbReference type="Pfam" id="PF07654">
    <property type="entry name" value="C1-set"/>
    <property type="match status" value="1"/>
</dbReference>
<dbReference type="Pfam" id="PF00129">
    <property type="entry name" value="MHC_I"/>
    <property type="match status" value="1"/>
</dbReference>
<dbReference type="Pfam" id="PF06623">
    <property type="entry name" value="MHC_I_C"/>
    <property type="match status" value="1"/>
</dbReference>
<dbReference type="PRINTS" id="PR01638">
    <property type="entry name" value="MHCCLASSI"/>
</dbReference>
<dbReference type="SMART" id="SM00407">
    <property type="entry name" value="IGc1"/>
    <property type="match status" value="1"/>
</dbReference>
<dbReference type="SUPFAM" id="SSF48726">
    <property type="entry name" value="Immunoglobulin"/>
    <property type="match status" value="1"/>
</dbReference>
<dbReference type="SUPFAM" id="SSF54452">
    <property type="entry name" value="MHC antigen-recognition domain"/>
    <property type="match status" value="1"/>
</dbReference>
<dbReference type="PROSITE" id="PS50835">
    <property type="entry name" value="IG_LIKE"/>
    <property type="match status" value="1"/>
</dbReference>
<dbReference type="PROSITE" id="PS00290">
    <property type="entry name" value="IG_MHC"/>
    <property type="match status" value="1"/>
</dbReference>
<keyword id="KW-1015">Disulfide bond</keyword>
<keyword id="KW-0325">Glycoprotein</keyword>
<keyword id="KW-0391">Immunity</keyword>
<keyword id="KW-0472">Membrane</keyword>
<keyword id="KW-0490">MHC I</keyword>
<keyword id="KW-1185">Reference proteome</keyword>
<keyword id="KW-0732">Signal</keyword>
<keyword id="KW-0812">Transmembrane</keyword>
<keyword id="KW-1133">Transmembrane helix</keyword>
<accession>P30388</accession>
<name>1OKO_GORGO</name>
<proteinExistence type="evidence at transcript level"/>
<sequence>MAVVAPRTLLLLLSGTLALTRTWAGSHSMRYFYTTMSRPGRGEPRFISVGYVDDTQFVRFDSDDASPREEPRAPWMEREGPEYWDRNTQIYKAQAQTDRVDLETLRGYYNQSEGGSHTIQRMYGCEVGPDGRFLRGYLQDAYDGKDYITLNEDLRSWTAADMAAQITQRKWEAAREAERLRAYMEGTCVEWLRRHLENGKETLQRTDPPKTHMTHHPVSDHEATLRCWALGFYPAEITLTWQRDGEDQTQDTELVETRPGGDGTFQKWAAVVVPSGKEQRYTCHVQHEGLPKPLTLRWEPSSQPTIPIVGIIAGLVLLGAVITGAVVAAMMWRKKSSGRKGGSYSQAASSDSAQGSDVSLTA</sequence>
<protein>
    <recommendedName>
        <fullName>Class I histocompatibility antigen, Gogo-OKO alpha chain</fullName>
    </recommendedName>
</protein>